<evidence type="ECO:0000250" key="1"/>
<evidence type="ECO:0000255" key="2">
    <source>
        <dbReference type="PROSITE-ProRule" id="PRU00449"/>
    </source>
</evidence>
<evidence type="ECO:0000255" key="3">
    <source>
        <dbReference type="PROSITE-ProRule" id="PRU00451"/>
    </source>
</evidence>
<evidence type="ECO:0000256" key="4">
    <source>
        <dbReference type="SAM" id="MobiDB-lite"/>
    </source>
</evidence>
<evidence type="ECO:0007829" key="5">
    <source>
        <dbReference type="PDB" id="1WFH"/>
    </source>
</evidence>
<feature type="chain" id="PRO_0000066578" description="Zinc finger A20 and AN1 domain-containing stress-associated protein 4">
    <location>
        <begin position="1"/>
        <end position="161"/>
    </location>
</feature>
<feature type="zinc finger region" description="A20-type" evidence="3">
    <location>
        <begin position="10"/>
        <end position="44"/>
    </location>
</feature>
<feature type="zinc finger region" description="AN1-type" evidence="2">
    <location>
        <begin position="96"/>
        <end position="142"/>
    </location>
</feature>
<feature type="region of interest" description="Disordered" evidence="4">
    <location>
        <begin position="76"/>
        <end position="99"/>
    </location>
</feature>
<feature type="compositionally biased region" description="Basic and acidic residues" evidence="4">
    <location>
        <begin position="76"/>
        <end position="85"/>
    </location>
</feature>
<feature type="binding site" evidence="3">
    <location>
        <position position="16"/>
    </location>
    <ligand>
        <name>Zn(2+)</name>
        <dbReference type="ChEBI" id="CHEBI:29105"/>
        <label>1</label>
    </ligand>
</feature>
<feature type="binding site" evidence="3">
    <location>
        <position position="20"/>
    </location>
    <ligand>
        <name>Zn(2+)</name>
        <dbReference type="ChEBI" id="CHEBI:29105"/>
        <label>1</label>
    </ligand>
</feature>
<feature type="binding site" evidence="3">
    <location>
        <position position="32"/>
    </location>
    <ligand>
        <name>Zn(2+)</name>
        <dbReference type="ChEBI" id="CHEBI:29105"/>
        <label>1</label>
    </ligand>
</feature>
<feature type="binding site" evidence="3">
    <location>
        <position position="35"/>
    </location>
    <ligand>
        <name>Zn(2+)</name>
        <dbReference type="ChEBI" id="CHEBI:29105"/>
        <label>1</label>
    </ligand>
</feature>
<feature type="binding site" evidence="2">
    <location>
        <position position="102"/>
    </location>
    <ligand>
        <name>Zn(2+)</name>
        <dbReference type="ChEBI" id="CHEBI:29105"/>
        <label>2</label>
    </ligand>
</feature>
<feature type="binding site" evidence="2">
    <location>
        <position position="105"/>
    </location>
    <ligand>
        <name>Zn(2+)</name>
        <dbReference type="ChEBI" id="CHEBI:29105"/>
        <label>2</label>
    </ligand>
</feature>
<feature type="binding site" evidence="2">
    <location>
        <position position="116"/>
    </location>
    <ligand>
        <name>Zn(2+)</name>
        <dbReference type="ChEBI" id="CHEBI:29105"/>
        <label>3</label>
    </ligand>
</feature>
<feature type="binding site" evidence="2">
    <location>
        <position position="118"/>
    </location>
    <ligand>
        <name>Zn(2+)</name>
        <dbReference type="ChEBI" id="CHEBI:29105"/>
        <label>3</label>
    </ligand>
</feature>
<feature type="binding site" evidence="2">
    <location>
        <position position="123"/>
    </location>
    <ligand>
        <name>Zn(2+)</name>
        <dbReference type="ChEBI" id="CHEBI:29105"/>
        <label>2</label>
    </ligand>
</feature>
<feature type="binding site" evidence="2">
    <location>
        <position position="126"/>
    </location>
    <ligand>
        <name>Zn(2+)</name>
        <dbReference type="ChEBI" id="CHEBI:29105"/>
        <label>2</label>
    </ligand>
</feature>
<feature type="binding site" evidence="2">
    <location>
        <position position="132"/>
    </location>
    <ligand>
        <name>Zn(2+)</name>
        <dbReference type="ChEBI" id="CHEBI:29105"/>
        <label>3</label>
    </ligand>
</feature>
<feature type="binding site" evidence="2">
    <location>
        <position position="134"/>
    </location>
    <ligand>
        <name>Zn(2+)</name>
        <dbReference type="ChEBI" id="CHEBI:29105"/>
        <label>3</label>
    </ligand>
</feature>
<feature type="turn" evidence="5">
    <location>
        <begin position="103"/>
        <end position="105"/>
    </location>
</feature>
<feature type="strand" evidence="5">
    <location>
        <begin position="117"/>
        <end position="119"/>
    </location>
</feature>
<feature type="turn" evidence="5">
    <location>
        <begin position="124"/>
        <end position="126"/>
    </location>
</feature>
<feature type="turn" evidence="5">
    <location>
        <begin position="129"/>
        <end position="133"/>
    </location>
</feature>
<dbReference type="EMBL" id="AC006921">
    <property type="protein sequence ID" value="AAD21434.1"/>
    <property type="molecule type" value="Genomic_DNA"/>
</dbReference>
<dbReference type="EMBL" id="CP002685">
    <property type="protein sequence ID" value="AEC09232.1"/>
    <property type="molecule type" value="Genomic_DNA"/>
</dbReference>
<dbReference type="EMBL" id="BT028881">
    <property type="protein sequence ID" value="ABI49428.1"/>
    <property type="molecule type" value="mRNA"/>
</dbReference>
<dbReference type="EMBL" id="AY086347">
    <property type="protein sequence ID" value="AAM64415.1"/>
    <property type="molecule type" value="mRNA"/>
</dbReference>
<dbReference type="PIR" id="C84779">
    <property type="entry name" value="C84779"/>
</dbReference>
<dbReference type="RefSeq" id="NP_565844.1">
    <property type="nucleotide sequence ID" value="NM_129189.5"/>
</dbReference>
<dbReference type="PDB" id="1WFH">
    <property type="method" value="NMR"/>
    <property type="chains" value="A=92-142"/>
</dbReference>
<dbReference type="PDBsum" id="1WFH"/>
<dbReference type="SMR" id="Q9SJM6"/>
<dbReference type="FunCoup" id="Q9SJM6">
    <property type="interactions" value="2117"/>
</dbReference>
<dbReference type="STRING" id="3702.Q9SJM6"/>
<dbReference type="PaxDb" id="3702-AT2G36320.1"/>
<dbReference type="ProteomicsDB" id="232685"/>
<dbReference type="EnsemblPlants" id="AT2G36320.1">
    <property type="protein sequence ID" value="AT2G36320.1"/>
    <property type="gene ID" value="AT2G36320"/>
</dbReference>
<dbReference type="GeneID" id="818205"/>
<dbReference type="Gramene" id="AT2G36320.1">
    <property type="protein sequence ID" value="AT2G36320.1"/>
    <property type="gene ID" value="AT2G36320"/>
</dbReference>
<dbReference type="KEGG" id="ath:AT2G36320"/>
<dbReference type="Araport" id="AT2G36320"/>
<dbReference type="TAIR" id="AT2G36320"/>
<dbReference type="eggNOG" id="KOG3173">
    <property type="taxonomic scope" value="Eukaryota"/>
</dbReference>
<dbReference type="HOGENOM" id="CLU_057016_5_3_1"/>
<dbReference type="InParanoid" id="Q9SJM6"/>
<dbReference type="OMA" id="EVHGCSY"/>
<dbReference type="OrthoDB" id="428577at2759"/>
<dbReference type="PhylomeDB" id="Q9SJM6"/>
<dbReference type="EvolutionaryTrace" id="Q9SJM6"/>
<dbReference type="PRO" id="PR:Q9SJM6"/>
<dbReference type="Proteomes" id="UP000006548">
    <property type="component" value="Chromosome 2"/>
</dbReference>
<dbReference type="ExpressionAtlas" id="Q9SJM6">
    <property type="expression patterns" value="baseline and differential"/>
</dbReference>
<dbReference type="GO" id="GO:0003677">
    <property type="term" value="F:DNA binding"/>
    <property type="evidence" value="ECO:0007669"/>
    <property type="project" value="InterPro"/>
</dbReference>
<dbReference type="GO" id="GO:0008270">
    <property type="term" value="F:zinc ion binding"/>
    <property type="evidence" value="ECO:0007669"/>
    <property type="project" value="UniProtKB-KW"/>
</dbReference>
<dbReference type="FunFam" id="4.10.1110.10:FF:000001">
    <property type="entry name" value="Zinc finger AN1-type containing 6"/>
    <property type="match status" value="1"/>
</dbReference>
<dbReference type="Gene3D" id="1.20.5.4770">
    <property type="match status" value="1"/>
</dbReference>
<dbReference type="Gene3D" id="4.10.1110.10">
    <property type="entry name" value="AN1-like Zinc finger"/>
    <property type="match status" value="1"/>
</dbReference>
<dbReference type="InterPro" id="IPR035896">
    <property type="entry name" value="AN1-like_Znf"/>
</dbReference>
<dbReference type="InterPro" id="IPR050652">
    <property type="entry name" value="AN1_A20_ZnFinger"/>
</dbReference>
<dbReference type="InterPro" id="IPR002653">
    <property type="entry name" value="Znf_A20"/>
</dbReference>
<dbReference type="InterPro" id="IPR000058">
    <property type="entry name" value="Znf_AN1"/>
</dbReference>
<dbReference type="PANTHER" id="PTHR10634">
    <property type="entry name" value="AN1-TYPE ZINC FINGER PROTEIN"/>
    <property type="match status" value="1"/>
</dbReference>
<dbReference type="PANTHER" id="PTHR10634:SF67">
    <property type="entry name" value="AN1-TYPE ZINC FINGER PROTEIN 3"/>
    <property type="match status" value="1"/>
</dbReference>
<dbReference type="Pfam" id="PF01754">
    <property type="entry name" value="zf-A20"/>
    <property type="match status" value="1"/>
</dbReference>
<dbReference type="Pfam" id="PF01428">
    <property type="entry name" value="zf-AN1"/>
    <property type="match status" value="1"/>
</dbReference>
<dbReference type="SMART" id="SM00259">
    <property type="entry name" value="ZnF_A20"/>
    <property type="match status" value="1"/>
</dbReference>
<dbReference type="SMART" id="SM00154">
    <property type="entry name" value="ZnF_AN1"/>
    <property type="match status" value="1"/>
</dbReference>
<dbReference type="SUPFAM" id="SSF118310">
    <property type="entry name" value="AN1-like Zinc finger"/>
    <property type="match status" value="1"/>
</dbReference>
<dbReference type="SUPFAM" id="SSF57716">
    <property type="entry name" value="Glucocorticoid receptor-like (DNA-binding domain)"/>
    <property type="match status" value="1"/>
</dbReference>
<dbReference type="PROSITE" id="PS51036">
    <property type="entry name" value="ZF_A20"/>
    <property type="match status" value="1"/>
</dbReference>
<dbReference type="PROSITE" id="PS51039">
    <property type="entry name" value="ZF_AN1"/>
    <property type="match status" value="1"/>
</dbReference>
<sequence>MAEEHRCETPEGHRLCVNNCGFFGSSATMNLCSNCYGDLCLKQQQQASMKSTVESSLSPVIAPVLENYAAELEIPTTKKTEEKKPIQIPTEQPSPPQRPNRCTVCRKRVGLTGFMCRCGTTFCGSHRYPEVHGCTFDFKSAGREEIAKANPLVIAAKLQKI</sequence>
<reference key="1">
    <citation type="journal article" date="1999" name="Nature">
        <title>Sequence and analysis of chromosome 2 of the plant Arabidopsis thaliana.</title>
        <authorList>
            <person name="Lin X."/>
            <person name="Kaul S."/>
            <person name="Rounsley S.D."/>
            <person name="Shea T.P."/>
            <person name="Benito M.-I."/>
            <person name="Town C.D."/>
            <person name="Fujii C.Y."/>
            <person name="Mason T.M."/>
            <person name="Bowman C.L."/>
            <person name="Barnstead M.E."/>
            <person name="Feldblyum T.V."/>
            <person name="Buell C.R."/>
            <person name="Ketchum K.A."/>
            <person name="Lee J.J."/>
            <person name="Ronning C.M."/>
            <person name="Koo H.L."/>
            <person name="Moffat K.S."/>
            <person name="Cronin L.A."/>
            <person name="Shen M."/>
            <person name="Pai G."/>
            <person name="Van Aken S."/>
            <person name="Umayam L."/>
            <person name="Tallon L.J."/>
            <person name="Gill J.E."/>
            <person name="Adams M.D."/>
            <person name="Carrera A.J."/>
            <person name="Creasy T.H."/>
            <person name="Goodman H.M."/>
            <person name="Somerville C.R."/>
            <person name="Copenhaver G.P."/>
            <person name="Preuss D."/>
            <person name="Nierman W.C."/>
            <person name="White O."/>
            <person name="Eisen J.A."/>
            <person name="Salzberg S.L."/>
            <person name="Fraser C.M."/>
            <person name="Venter J.C."/>
        </authorList>
    </citation>
    <scope>NUCLEOTIDE SEQUENCE [LARGE SCALE GENOMIC DNA]</scope>
    <source>
        <strain>cv. Columbia</strain>
    </source>
</reference>
<reference key="2">
    <citation type="journal article" date="2017" name="Plant J.">
        <title>Araport11: a complete reannotation of the Arabidopsis thaliana reference genome.</title>
        <authorList>
            <person name="Cheng C.Y."/>
            <person name="Krishnakumar V."/>
            <person name="Chan A.P."/>
            <person name="Thibaud-Nissen F."/>
            <person name="Schobel S."/>
            <person name="Town C.D."/>
        </authorList>
    </citation>
    <scope>GENOME REANNOTATION</scope>
    <source>
        <strain>cv. Columbia</strain>
    </source>
</reference>
<reference key="3">
    <citation type="submission" date="2006-09" db="EMBL/GenBank/DDBJ databases">
        <title>Arabidopsis ORF clones.</title>
        <authorList>
            <person name="Bautista V.R."/>
            <person name="Kim C.J."/>
            <person name="Chen H."/>
            <person name="Quinitio C."/>
            <person name="Ecker J.R."/>
        </authorList>
    </citation>
    <scope>NUCLEOTIDE SEQUENCE [LARGE SCALE MRNA]</scope>
    <source>
        <strain>cv. Columbia</strain>
    </source>
</reference>
<reference key="4">
    <citation type="submission" date="2002-03" db="EMBL/GenBank/DDBJ databases">
        <title>Full-length cDNA from Arabidopsis thaliana.</title>
        <authorList>
            <person name="Brover V.V."/>
            <person name="Troukhan M.E."/>
            <person name="Alexandrov N.A."/>
            <person name="Lu Y.-P."/>
            <person name="Flavell R.B."/>
            <person name="Feldmann K.A."/>
        </authorList>
    </citation>
    <scope>NUCLEOTIDE SEQUENCE [LARGE SCALE MRNA]</scope>
</reference>
<reference key="5">
    <citation type="journal article" date="2006" name="Mol. Genet. Genomics">
        <title>Genome-wide analysis of the stress associated protein (SAP) gene family containing A20/AN1 zinc-finger(s) in rice and their phylogenetic relationship with Arabidopsis.</title>
        <authorList>
            <person name="Vij S."/>
            <person name="Tyagi A.K."/>
        </authorList>
    </citation>
    <scope>GENE FAMILY</scope>
</reference>
<reference key="6">
    <citation type="submission" date="2004-11" db="PDB data bank">
        <title>Solution structure of the ZF-AN1 domain from Arabidopsis thaliana At2g36320 protein.</title>
        <authorList>
            <consortium name="RIKEN structural genomics initiative (RSGI)"/>
        </authorList>
    </citation>
    <scope>STRUCTURE BY NMR OF 92-142</scope>
</reference>
<comment type="function">
    <text evidence="1">May be involved in environmental stress response.</text>
</comment>
<name>SAP4_ARATH</name>
<accession>Q9SJM6</accession>
<accession>Q0IGN9</accession>
<organism>
    <name type="scientific">Arabidopsis thaliana</name>
    <name type="common">Mouse-ear cress</name>
    <dbReference type="NCBI Taxonomy" id="3702"/>
    <lineage>
        <taxon>Eukaryota</taxon>
        <taxon>Viridiplantae</taxon>
        <taxon>Streptophyta</taxon>
        <taxon>Embryophyta</taxon>
        <taxon>Tracheophyta</taxon>
        <taxon>Spermatophyta</taxon>
        <taxon>Magnoliopsida</taxon>
        <taxon>eudicotyledons</taxon>
        <taxon>Gunneridae</taxon>
        <taxon>Pentapetalae</taxon>
        <taxon>rosids</taxon>
        <taxon>malvids</taxon>
        <taxon>Brassicales</taxon>
        <taxon>Brassicaceae</taxon>
        <taxon>Camelineae</taxon>
        <taxon>Arabidopsis</taxon>
    </lineage>
</organism>
<protein>
    <recommendedName>
        <fullName>Zinc finger A20 and AN1 domain-containing stress-associated protein 4</fullName>
        <shortName>AtSAP4</shortName>
    </recommendedName>
</protein>
<proteinExistence type="evidence at protein level"/>
<keyword id="KW-0002">3D-structure</keyword>
<keyword id="KW-0479">Metal-binding</keyword>
<keyword id="KW-1185">Reference proteome</keyword>
<keyword id="KW-0862">Zinc</keyword>
<keyword id="KW-0863">Zinc-finger</keyword>
<gene>
    <name type="primary">SAP4</name>
    <name type="ordered locus">At2g36320</name>
    <name type="ORF">F2H17.7</name>
</gene>